<evidence type="ECO:0000250" key="1">
    <source>
        <dbReference type="UniProtKB" id="Q29451"/>
    </source>
</evidence>
<evidence type="ECO:0000255" key="2"/>
<evidence type="ECO:0000256" key="3">
    <source>
        <dbReference type="SAM" id="MobiDB-lite"/>
    </source>
</evidence>
<evidence type="ECO:0000269" key="4">
    <source>
    </source>
</evidence>
<evidence type="ECO:0000269" key="5">
    <source>
    </source>
</evidence>
<evidence type="ECO:0000269" key="6">
    <source>
    </source>
</evidence>
<evidence type="ECO:0000269" key="7">
    <source>
    </source>
</evidence>
<evidence type="ECO:0000269" key="8">
    <source>
    </source>
</evidence>
<evidence type="ECO:0000269" key="9">
    <source>
    </source>
</evidence>
<evidence type="ECO:0000269" key="10">
    <source>
    </source>
</evidence>
<evidence type="ECO:0000269" key="11">
    <source>
    </source>
</evidence>
<evidence type="ECO:0000269" key="12">
    <source>
    </source>
</evidence>
<evidence type="ECO:0000303" key="13">
    <source>
    </source>
</evidence>
<evidence type="ECO:0000303" key="14">
    <source>
    </source>
</evidence>
<evidence type="ECO:0000303" key="15">
    <source>
    </source>
</evidence>
<evidence type="ECO:0000303" key="16">
    <source>
    </source>
</evidence>
<evidence type="ECO:0000303" key="17">
    <source>
    </source>
</evidence>
<evidence type="ECO:0000303" key="18">
    <source>
    </source>
</evidence>
<evidence type="ECO:0000305" key="19"/>
<evidence type="ECO:0007829" key="20">
    <source>
        <dbReference type="PDB" id="6B9O"/>
    </source>
</evidence>
<evidence type="ECO:0007829" key="21">
    <source>
        <dbReference type="PDB" id="6B9P"/>
    </source>
</evidence>
<feature type="chain" id="PRO_0000431307" description="Alpha-mannosidase, heavy subunit" evidence="9">
    <location>
        <begin position="1"/>
        <end position="562"/>
    </location>
</feature>
<feature type="chain" id="PRO_0000431308" description="Alpha-mannosidase, light subunit" evidence="9">
    <location>
        <begin position="563"/>
        <end position="981"/>
    </location>
</feature>
<feature type="region of interest" description="Disordered" evidence="3">
    <location>
        <begin position="938"/>
        <end position="957"/>
    </location>
</feature>
<feature type="active site" description="Nucleophile" evidence="12">
    <location>
        <position position="145"/>
    </location>
</feature>
<feature type="binding site" evidence="1">
    <location>
        <position position="23"/>
    </location>
    <ligand>
        <name>Zn(2+)</name>
        <dbReference type="ChEBI" id="CHEBI:29105"/>
    </ligand>
</feature>
<feature type="binding site" evidence="1">
    <location>
        <position position="25"/>
    </location>
    <ligand>
        <name>Zn(2+)</name>
        <dbReference type="ChEBI" id="CHEBI:29105"/>
    </ligand>
</feature>
<feature type="binding site" evidence="1">
    <location>
        <position position="145"/>
    </location>
    <ligand>
        <name>Zn(2+)</name>
        <dbReference type="ChEBI" id="CHEBI:29105"/>
    </ligand>
</feature>
<feature type="binding site" evidence="1">
    <location>
        <position position="386"/>
    </location>
    <ligand>
        <name>Zn(2+)</name>
        <dbReference type="ChEBI" id="CHEBI:29105"/>
    </ligand>
</feature>
<feature type="site" description="Cleavage; to produce subunits" evidence="9">
    <location>
        <begin position="562"/>
        <end position="563"/>
    </location>
</feature>
<feature type="glycosylation site" description="N-linked (GlcNAc...) asparagine" evidence="9">
    <location>
        <position position="312"/>
    </location>
</feature>
<feature type="glycosylation site" description="N-linked (GlcNAc...) asparagine" evidence="9">
    <location>
        <position position="446"/>
    </location>
</feature>
<feature type="disulfide bond" evidence="9">
    <location>
        <begin position="422"/>
        <end position="432"/>
    </location>
</feature>
<feature type="disulfide bond" evidence="9">
    <location>
        <begin position="442"/>
        <end position="450"/>
    </location>
</feature>
<feature type="disulfide bond" evidence="9">
    <location>
        <begin position="800"/>
        <end position="807"/>
    </location>
</feature>
<feature type="unsure residue" description="K or Q" evidence="9">
    <location>
        <position position="2"/>
    </location>
</feature>
<feature type="unsure residue" description="Q or K" evidence="9">
    <location>
        <position position="13"/>
    </location>
</feature>
<feature type="unsure residue" description="L or I" evidence="9">
    <location>
        <position position="14"/>
    </location>
</feature>
<feature type="unsure residue" description="L or I" evidence="9">
    <location>
        <position position="18"/>
    </location>
</feature>
<feature type="unsure residue" description="L or I" evidence="9">
    <location>
        <position position="29"/>
    </location>
</feature>
<feature type="unsure residue" description="K or Q" evidence="9">
    <location>
        <position position="30"/>
    </location>
</feature>
<feature type="unsure residue" description="Q or K" evidence="9">
    <location>
        <position position="34"/>
    </location>
</feature>
<feature type="unsure residue" description="I or L" evidence="9">
    <location>
        <position position="43"/>
    </location>
</feature>
<feature type="unsure residue" description="Q or K" evidence="9">
    <location>
        <position position="44"/>
    </location>
</feature>
<feature type="unsure residue" description="L or I" evidence="9">
    <location>
        <position position="52"/>
    </location>
</feature>
<feature type="unsure residue" description="L or I" evidence="9">
    <location>
        <position position="59"/>
    </location>
</feature>
<feature type="unsure residue" description="Q or K" evidence="9">
    <location>
        <position position="60"/>
    </location>
</feature>
<feature type="unsure residue" description="K or Q" evidence="9">
    <location>
        <position position="66"/>
    </location>
</feature>
<feature type="unsure residue" description="L or I" evidence="9">
    <location>
        <position position="80"/>
    </location>
</feature>
<feature type="unsure residue" description="Q or K" evidence="9">
    <location>
        <position position="82"/>
    </location>
</feature>
<feature type="unsure residue" description="K or Q" evidence="9">
    <location>
        <position position="87"/>
    </location>
</feature>
<feature type="unsure residue" description="L or I" evidence="9">
    <location>
        <position position="89"/>
    </location>
</feature>
<feature type="unsure residue" description="K or Q" evidence="9">
    <location>
        <position position="92"/>
    </location>
</feature>
<feature type="unsure residue" description="L or I" evidence="9">
    <location>
        <position position="93"/>
    </location>
</feature>
<feature type="unsure residue" description="K or Q" evidence="9">
    <location>
        <position position="95"/>
    </location>
</feature>
<feature type="unsure residue" description="Q or K" evidence="9">
    <location>
        <position position="98"/>
    </location>
</feature>
<feature type="unsure residue" description="L or I" evidence="9">
    <location>
        <position position="99"/>
    </location>
</feature>
<feature type="unsure residue" description="I or L" evidence="9">
    <location>
        <position position="117"/>
    </location>
</feature>
<feature type="unsure residue" description="I or L" evidence="9">
    <location>
        <position position="120"/>
    </location>
</feature>
<feature type="unsure residue" description="L or I" evidence="9">
    <location>
        <position position="125"/>
    </location>
</feature>
<feature type="unsure residue" description="L or I" evidence="9">
    <location>
        <position position="130"/>
    </location>
</feature>
<feature type="unsure residue" description="Q or K" evidence="9">
    <location>
        <position position="131"/>
    </location>
</feature>
<feature type="unsure residue" description="Q or K" evidence="9">
    <location>
        <position position="133"/>
    </location>
</feature>
<feature type="unsure residue" description="L or I" evidence="9">
    <location>
        <position position="156"/>
    </location>
</feature>
<feature type="unsure residue" description="L or I" evidence="9">
    <location>
        <position position="157"/>
    </location>
</feature>
<feature type="unsure residue" description="L or I" evidence="9">
    <location>
        <position position="161"/>
    </location>
</feature>
<feature type="unsure residue" description="I or L" evidence="9">
    <location>
        <position position="171"/>
    </location>
</feature>
<feature type="unsure residue" description="Q or K" evidence="9">
    <location>
        <position position="174"/>
    </location>
</feature>
<feature type="unsure residue" description="K or Q" evidence="9">
    <location>
        <position position="178"/>
    </location>
</feature>
<feature type="unsure residue" description="K or Q" evidence="9">
    <location>
        <position position="180"/>
    </location>
</feature>
<feature type="unsure residue" description="K or Q" evidence="9">
    <location>
        <position position="183"/>
    </location>
</feature>
<feature type="unsure residue" description="L or I" evidence="9">
    <location>
        <position position="185"/>
    </location>
</feature>
<feature type="unsure residue" description="K or Q" evidence="9">
    <location>
        <position position="193"/>
    </location>
</feature>
<feature type="unsure residue" description="Q or K" evidence="9">
    <location>
        <position position="200"/>
    </location>
</feature>
<feature type="unsure residue" description="I or L" evidence="9">
    <location>
        <position position="201"/>
    </location>
</feature>
<feature type="unsure residue" description="L or I" evidence="9">
    <location>
        <position position="227"/>
    </location>
</feature>
<feature type="unsure residue" description="Q or K" evidence="9">
    <location>
        <position position="228"/>
    </location>
</feature>
<feature type="unsure residue" description="L or I" evidence="9">
    <location>
        <position position="233"/>
    </location>
</feature>
<feature type="unsure residue" description="Q or K" evidence="9">
    <location>
        <position position="243"/>
    </location>
</feature>
<feature type="unsure residue" description="L or I" evidence="9">
    <location>
        <position position="246"/>
    </location>
</feature>
<feature type="unsure residue" description="L or I" evidence="9">
    <location>
        <position position="250"/>
    </location>
</feature>
<feature type="unsure residue" description="Q or K" evidence="9">
    <location>
        <position position="252"/>
    </location>
</feature>
<feature type="unsure residue" description="K or Q" evidence="9">
    <location>
        <position position="254"/>
    </location>
</feature>
<feature type="unsure residue" description="L or I" evidence="9">
    <location>
        <position position="255"/>
    </location>
</feature>
<feature type="unsure residue" description="L or I" evidence="9">
    <location>
        <position position="261"/>
    </location>
</feature>
<feature type="unsure residue" description="Q or K" evidence="9">
    <location>
        <position position="270"/>
    </location>
</feature>
<feature type="unsure residue" description="Q or K" evidence="9">
    <location>
        <position position="272"/>
    </location>
</feature>
<feature type="unsure residue" description="K or Q" evidence="9">
    <location>
        <position position="279"/>
    </location>
</feature>
<feature type="unsure residue" description="Q or K" evidence="9">
    <location>
        <position position="280"/>
    </location>
</feature>
<feature type="unsure residue" description="K or Q" evidence="9">
    <location>
        <position position="283"/>
    </location>
</feature>
<feature type="unsure residue" description="L or I" evidence="9">
    <location>
        <position position="284"/>
    </location>
</feature>
<feature type="unsure residue" description="L or I" evidence="9">
    <location>
        <position position="285"/>
    </location>
</feature>
<feature type="unsure residue" description="K or Q" evidence="9">
    <location>
        <position position="290"/>
    </location>
</feature>
<feature type="unsure residue" description="L or I" evidence="9">
    <location>
        <position position="297"/>
    </location>
</feature>
<feature type="unsure residue" description="L or I" evidence="9">
    <location>
        <position position="303"/>
    </location>
</feature>
<feature type="unsure residue" description="K or Q" evidence="9">
    <location>
        <position position="308"/>
    </location>
</feature>
<feature type="unsure residue" description="Q or K" evidence="9">
    <location>
        <position position="313"/>
    </location>
</feature>
<feature type="unsure residue" description="L or I" evidence="9">
    <location>
        <position position="317"/>
    </location>
</feature>
<feature type="unsure residue" description="K or Q" evidence="9">
    <location>
        <position position="318"/>
    </location>
</feature>
<feature type="unsure residue" description="I or L" evidence="9">
    <location>
        <position position="319"/>
    </location>
</feature>
<feature type="unsure residue" description="L or I" evidence="9">
    <location>
        <position position="350"/>
    </location>
</feature>
<feature type="unsure residue" description="L or I" evidence="9">
    <location>
        <position position="355"/>
    </location>
</feature>
<feature type="unsure residue" description="K or Q" evidence="9">
    <location>
        <position position="366"/>
    </location>
</feature>
<feature type="unsure residue" description="K or Q" evidence="9">
    <location>
        <position position="367"/>
    </location>
</feature>
<feature type="unsure residue" description="K or Q" evidence="9">
    <location>
        <position position="370"/>
    </location>
</feature>
<feature type="unsure residue" description="L or I" evidence="9">
    <location>
        <position position="376"/>
    </location>
</feature>
<feature type="unsure residue" description="L or I" evidence="9">
    <location>
        <position position="380"/>
    </location>
</feature>
<feature type="unsure residue" description="I or L" evidence="9">
    <location>
        <position position="382"/>
    </location>
</feature>
<feature type="unsure residue" description="Q or K" evidence="9">
    <location>
        <position position="384"/>
    </location>
</feature>
<feature type="unsure residue" description="K or Q" evidence="9">
    <location>
        <position position="394"/>
    </location>
</feature>
<feature type="unsure residue" description="Q or K" evidence="9">
    <location>
        <position position="395"/>
    </location>
</feature>
<feature type="unsure residue" description="K or Q" evidence="9">
    <location>
        <position position="403"/>
    </location>
</feature>
<feature type="unsure residue" description="L or I" evidence="9">
    <location>
        <position position="405"/>
    </location>
</feature>
<feature type="unsure residue" description="L or I" evidence="9">
    <location>
        <position position="407"/>
    </location>
</feature>
<feature type="unsure residue" description="K or Q" evidence="9">
    <location>
        <position position="411"/>
    </location>
</feature>
<feature type="unsure residue" description="L or I" evidence="9">
    <location>
        <position position="420"/>
    </location>
</feature>
<feature type="unsure residue" description="L or I" evidence="9">
    <location>
        <position position="423"/>
    </location>
</feature>
<feature type="unsure residue" description="K or Q" evidence="9">
    <location>
        <position position="426"/>
    </location>
</feature>
<feature type="unsure residue" description="Q or K" evidence="9">
    <location>
        <position position="427"/>
    </location>
</feature>
<feature type="unsure residue" description="Q or K" evidence="9">
    <location>
        <position position="431"/>
    </location>
</feature>
<feature type="unsure residue" description="Q or K" evidence="9">
    <location>
        <position position="441"/>
    </location>
</feature>
<feature type="unsure residue" description="L or I" evidence="9">
    <location>
        <position position="444"/>
    </location>
</feature>
<feature type="unsure residue" description="I or L" evidence="9">
    <location>
        <position position="447"/>
    </location>
</feature>
<feature type="unsure residue" description="L or I" evidence="9">
    <location>
        <position position="457"/>
    </location>
</feature>
<feature type="unsure residue" description="K or Q" evidence="9">
    <location>
        <position position="461"/>
    </location>
</feature>
<feature type="unsure residue" description="L or I" evidence="9">
    <location>
        <position position="463"/>
    </location>
</feature>
<feature type="unsure residue" description="L or I" evidence="9">
    <location>
        <position position="471"/>
    </location>
</feature>
<feature type="unsure residue" description="I or L" evidence="9">
    <location>
        <position position="478"/>
    </location>
</feature>
<feature type="unsure residue" description="I or L" evidence="9">
    <location>
        <position position="481"/>
    </location>
</feature>
<feature type="unsure residue" description="L or I" evidence="9">
    <location>
        <position position="488"/>
    </location>
</feature>
<feature type="unsure residue" description="K or Q" evidence="9">
    <location>
        <position position="491"/>
    </location>
</feature>
<feature type="unsure residue" description="K or Q" evidence="9">
    <location>
        <position position="497"/>
    </location>
</feature>
<feature type="unsure residue" description="L or I" evidence="9">
    <location>
        <position position="498"/>
    </location>
</feature>
<feature type="unsure residue" description="Q or K" evidence="9">
    <location>
        <position position="501"/>
    </location>
</feature>
<feature type="unsure residue" description="L or I" evidence="9">
    <location>
        <position position="512"/>
    </location>
</feature>
<feature type="unsure residue" description="K or Q" evidence="9">
    <location>
        <position position="518"/>
    </location>
</feature>
<feature type="unsure residue" description="L or I" evidence="9">
    <location>
        <position position="534"/>
    </location>
</feature>
<feature type="unsure residue" description="K or Q" evidence="9">
    <location>
        <position position="536"/>
    </location>
</feature>
<feature type="unsure residue" description="L or I" evidence="9">
    <location>
        <position position="542"/>
    </location>
</feature>
<feature type="unsure residue" description="I or L" evidence="9">
    <location>
        <position position="549"/>
    </location>
</feature>
<feature type="unsure residue" description="K or Q" evidence="9">
    <location>
        <position position="555"/>
    </location>
</feature>
<feature type="unsure residue" description="L or I" evidence="9">
    <location>
        <position position="561"/>
    </location>
</feature>
<feature type="unsure residue" description="L or I" evidence="9">
    <location>
        <position position="563"/>
    </location>
</feature>
<feature type="unsure residue" description="Q or K" evidence="9">
    <location>
        <position position="565"/>
    </location>
</feature>
<feature type="unsure residue" description="K or Q" evidence="9">
    <location>
        <position position="566"/>
    </location>
</feature>
<feature type="unsure residue" description="L or I" evidence="9">
    <location>
        <position position="570"/>
    </location>
</feature>
<feature type="unsure residue" description="I or L" evidence="9">
    <location>
        <position position="572"/>
    </location>
</feature>
<feature type="unsure residue" description="L or I" evidence="9">
    <location>
        <position position="577"/>
    </location>
</feature>
<feature type="unsure residue" description="K or Q" evidence="9">
    <location>
        <position position="578"/>
    </location>
</feature>
<feature type="unsure residue" description="L or I" evidence="9">
    <location>
        <position position="584"/>
    </location>
</feature>
<feature type="unsure residue" description="Q or K" evidence="9">
    <location>
        <position position="587"/>
    </location>
</feature>
<feature type="unsure residue" description="L or I" evidence="9">
    <location>
        <position position="588"/>
    </location>
</feature>
<feature type="unsure residue" description="K or Q" evidence="9">
    <location>
        <position position="589"/>
    </location>
</feature>
<feature type="unsure residue" description="K or Q" evidence="9">
    <location>
        <position position="595"/>
    </location>
</feature>
<feature type="unsure residue" description="L or I" evidence="9">
    <location>
        <position position="600"/>
    </location>
</feature>
<feature type="unsure residue" description="I or L" evidence="9">
    <location>
        <position position="602"/>
    </location>
</feature>
<feature type="unsure residue" description="Q or K" evidence="9">
    <location>
        <position position="603"/>
    </location>
</feature>
<feature type="unsure residue" description="Q or K" evidence="9">
    <location>
        <position position="604"/>
    </location>
</feature>
<feature type="unsure residue" description="L or I" evidence="9">
    <location>
        <position position="607"/>
    </location>
</feature>
<feature type="unsure residue" description="Q or K" evidence="9">
    <location>
        <position position="620"/>
    </location>
</feature>
<feature type="unsure residue" description="L or I" evidence="9">
    <location>
        <position position="626"/>
    </location>
</feature>
<feature type="unsure residue" description="Q or K" evidence="9">
    <location>
        <position position="632"/>
    </location>
</feature>
<feature type="unsure residue" description="L or I" evidence="9">
    <location>
        <position position="651"/>
    </location>
</feature>
<feature type="unsure residue" description="Q or K" evidence="9">
    <location>
        <position position="657"/>
    </location>
</feature>
<feature type="unsure residue" description="K or Q" evidence="9">
    <location>
        <position position="658"/>
    </location>
</feature>
<feature type="unsure residue" description="I or L" evidence="9">
    <location>
        <position position="663"/>
    </location>
</feature>
<feature type="unsure residue" description="Q or K" evidence="9">
    <location>
        <position position="665"/>
    </location>
</feature>
<feature type="unsure residue" description="L or I" evidence="9">
    <location>
        <position position="669"/>
    </location>
</feature>
<feature type="unsure residue" description="K or Q" evidence="9">
    <location>
        <position position="671"/>
    </location>
</feature>
<feature type="unsure residue" description="K or Q" evidence="9">
    <location>
        <position position="673"/>
    </location>
</feature>
<feature type="unsure residue" description="I or L" evidence="9">
    <location>
        <position position="678"/>
    </location>
</feature>
<feature type="unsure residue" description="I or L" evidence="9">
    <location>
        <position position="682"/>
    </location>
</feature>
<feature type="unsure residue" description="I or L" evidence="9">
    <location>
        <position position="685"/>
    </location>
</feature>
<feature type="unsure residue" description="K or Q" evidence="9">
    <location>
        <position position="693"/>
    </location>
</feature>
<feature type="unsure residue" description="I or L" evidence="9">
    <location>
        <position position="696"/>
    </location>
</feature>
<feature type="unsure residue" description="K or Q" evidence="9">
    <location>
        <position position="707"/>
    </location>
</feature>
<feature type="unsure residue" description="L or I" evidence="9">
    <location>
        <position position="719"/>
    </location>
</feature>
<feature type="unsure residue" description="K or Q" evidence="9">
    <location>
        <position position="720"/>
    </location>
</feature>
<feature type="unsure residue" description="L or I" evidence="9">
    <location>
        <position position="731"/>
    </location>
</feature>
<feature type="unsure residue" description="Q or K" evidence="9">
    <location>
        <position position="735"/>
    </location>
</feature>
<feature type="unsure residue" description="L or I" evidence="9">
    <location>
        <position position="744"/>
    </location>
</feature>
<feature type="unsure residue" description="L or I" evidence="9">
    <location>
        <position position="746"/>
    </location>
</feature>
<feature type="unsure residue" description="L or I" evidence="9">
    <location>
        <position position="748"/>
    </location>
</feature>
<feature type="unsure residue" description="K or Q" evidence="9">
    <location>
        <position position="751"/>
    </location>
</feature>
<feature type="unsure residue" description="K or Q" evidence="9">
    <location>
        <position position="754"/>
    </location>
</feature>
<feature type="unsure residue" description="L or I" evidence="9">
    <location>
        <position position="760"/>
    </location>
</feature>
<feature type="unsure residue" description="I or L" evidence="9">
    <location>
        <position position="770"/>
    </location>
</feature>
<feature type="unsure residue" description="K or Q" evidence="9">
    <location>
        <position position="771"/>
    </location>
</feature>
<feature type="unsure residue" description="L or I" evidence="9">
    <location>
        <position position="777"/>
    </location>
</feature>
<feature type="unsure residue" description="L or I" evidence="9">
    <location>
        <position position="779"/>
    </location>
</feature>
<feature type="unsure residue" description="L or I" evidence="9">
    <location>
        <position position="784"/>
    </location>
</feature>
<feature type="unsure residue" description="L or I" evidence="9">
    <location>
        <position position="795"/>
    </location>
</feature>
<feature type="unsure residue" description="Q or K" evidence="9">
    <location>
        <position position="798"/>
    </location>
</feature>
<feature type="unsure residue" description="K or Q" evidence="9">
    <location>
        <position position="803"/>
    </location>
</feature>
<feature type="unsure residue" description="L or I" evidence="9">
    <location>
        <position position="810"/>
    </location>
</feature>
<feature type="unsure residue" description="L or I" evidence="9">
    <location>
        <position position="818"/>
    </location>
</feature>
<feature type="unsure residue" description="I or L" evidence="9">
    <location>
        <position position="820"/>
    </location>
</feature>
<feature type="unsure residue" description="K or Q" evidence="9">
    <location>
        <position position="822"/>
    </location>
</feature>
<feature type="unsure residue" description="Q or K" evidence="9">
    <location>
        <position position="835"/>
    </location>
</feature>
<feature type="unsure residue" description="I or L" evidence="9">
    <location>
        <position position="837"/>
    </location>
</feature>
<feature type="unsure residue" description="L or I" evidence="9">
    <location>
        <position position="842"/>
    </location>
</feature>
<feature type="unsure residue" description="L or I" evidence="9">
    <location>
        <position position="843"/>
    </location>
</feature>
<feature type="unsure residue" description="Q or K" evidence="9">
    <location>
        <position position="847"/>
    </location>
</feature>
<feature type="unsure residue" description="K or Q" evidence="9">
    <location>
        <position position="854"/>
    </location>
</feature>
<feature type="unsure residue" description="K or Q" evidence="9">
    <location>
        <position position="860"/>
    </location>
</feature>
<feature type="unsure residue" description="L or I" evidence="9">
    <location>
        <position position="870"/>
    </location>
</feature>
<feature type="unsure residue" description="L or I" evidence="9">
    <location>
        <position position="876"/>
    </location>
</feature>
<feature type="unsure residue" description="I or L" evidence="9">
    <location>
        <position position="877"/>
    </location>
</feature>
<feature type="unsure residue" description="L or I" evidence="9">
    <location>
        <position position="879"/>
    </location>
</feature>
<feature type="unsure residue" description="L or I" evidence="9">
    <location>
        <position position="882"/>
    </location>
</feature>
<feature type="unsure residue" description="L or I" evidence="9">
    <location>
        <position position="886"/>
    </location>
</feature>
<feature type="unsure residue" description="L or I" evidence="9">
    <location>
        <position position="888"/>
    </location>
</feature>
<feature type="unsure residue" description="L or I" evidence="9">
    <location>
        <position position="889"/>
    </location>
</feature>
<feature type="unsure residue" description="L or I" evidence="9">
    <location>
        <position position="891"/>
    </location>
</feature>
<feature type="unsure residue" description="L or I" evidence="9">
    <location>
        <position position="894"/>
    </location>
</feature>
<feature type="unsure residue" description="L or I" evidence="9">
    <location>
        <position position="906"/>
    </location>
</feature>
<feature type="unsure residue" description="K or Q" evidence="9">
    <location>
        <position position="908"/>
    </location>
</feature>
<feature type="unsure residue" description="L or I" evidence="9">
    <location>
        <position position="911"/>
    </location>
</feature>
<feature type="unsure residue" description="K or Q" evidence="9">
    <location>
        <position position="912"/>
    </location>
</feature>
<feature type="unsure residue" description="K or Q" evidence="9">
    <location>
        <position position="913"/>
    </location>
</feature>
<feature type="unsure residue" description="L or I" evidence="9">
    <location>
        <position position="914"/>
    </location>
</feature>
<feature type="unsure residue" description="Q or K" evidence="9">
    <location>
        <position position="918"/>
    </location>
</feature>
<feature type="unsure residue" description="K or Q" evidence="9">
    <location>
        <position position="919"/>
    </location>
</feature>
<feature type="unsure residue" description="L or I" evidence="9">
    <location>
        <position position="920"/>
    </location>
</feature>
<feature type="unsure residue" description="L or I" evidence="9">
    <location>
        <position position="923"/>
    </location>
</feature>
<feature type="unsure residue" description="L or I" evidence="9">
    <location>
        <position position="928"/>
    </location>
</feature>
<feature type="unsure residue" description="Q or K" evidence="9">
    <location>
        <position position="932"/>
    </location>
</feature>
<feature type="unsure residue" description="K or Q" evidence="9">
    <location>
        <position position="934"/>
    </location>
</feature>
<feature type="unsure residue" description="K or Q" evidence="9">
    <location>
        <position position="938"/>
    </location>
</feature>
<feature type="unsure residue" description="K or Q" evidence="9">
    <location>
        <position position="939"/>
    </location>
</feature>
<feature type="unsure residue" description="K or Q" evidence="9">
    <location>
        <position position="941"/>
    </location>
</feature>
<feature type="unsure residue" description="Q or K" evidence="9">
    <location>
        <position position="950"/>
    </location>
</feature>
<feature type="unsure residue" description="Q or K" evidence="9">
    <location>
        <position position="953"/>
    </location>
</feature>
<feature type="unsure residue" description="L or I" evidence="9">
    <location>
        <position position="969"/>
    </location>
</feature>
<feature type="unsure residue" description="I or L" evidence="9">
    <location>
        <position position="974"/>
    </location>
</feature>
<feature type="unsure residue" description="L or I" evidence="9">
    <location>
        <position position="978"/>
    </location>
</feature>
<feature type="unsure residue" description="L or I" evidence="9">
    <location>
        <position position="979"/>
    </location>
</feature>
<feature type="unsure residue" description="Q or K" evidence="9">
    <location>
        <position position="980"/>
    </location>
</feature>
<feature type="strand" evidence="20">
    <location>
        <begin position="15"/>
        <end position="20"/>
    </location>
</feature>
<feature type="strand" evidence="20">
    <location>
        <begin position="26"/>
        <end position="30"/>
    </location>
</feature>
<feature type="helix" evidence="20">
    <location>
        <begin position="32"/>
        <end position="37"/>
    </location>
</feature>
<feature type="turn" evidence="20">
    <location>
        <begin position="41"/>
        <end position="43"/>
    </location>
</feature>
<feature type="helix" evidence="20">
    <location>
        <begin position="48"/>
        <end position="61"/>
    </location>
</feature>
<feature type="strand" evidence="20">
    <location>
        <begin position="67"/>
        <end position="69"/>
    </location>
</feature>
<feature type="helix" evidence="20">
    <location>
        <begin position="72"/>
        <end position="79"/>
    </location>
</feature>
<feature type="helix" evidence="20">
    <location>
        <begin position="84"/>
        <end position="95"/>
    </location>
</feature>
<feature type="strand" evidence="20">
    <location>
        <begin position="98"/>
        <end position="103"/>
    </location>
</feature>
<feature type="strand" evidence="20">
    <location>
        <begin position="105"/>
        <end position="107"/>
    </location>
</feature>
<feature type="strand" evidence="20">
    <location>
        <begin position="111"/>
        <end position="113"/>
    </location>
</feature>
<feature type="helix" evidence="20">
    <location>
        <begin position="116"/>
        <end position="134"/>
    </location>
</feature>
<feature type="strand" evidence="20">
    <location>
        <begin position="140"/>
        <end position="142"/>
    </location>
</feature>
<feature type="strand" evidence="20">
    <location>
        <begin position="144"/>
        <end position="149"/>
    </location>
</feature>
<feature type="helix" evidence="20">
    <location>
        <begin position="151"/>
        <end position="155"/>
    </location>
</feature>
<feature type="turn" evidence="20">
    <location>
        <begin position="156"/>
        <end position="158"/>
    </location>
</feature>
<feature type="helix" evidence="20">
    <location>
        <begin position="159"/>
        <end position="161"/>
    </location>
</feature>
<feature type="strand" evidence="20">
    <location>
        <begin position="164"/>
        <end position="169"/>
    </location>
</feature>
<feature type="helix" evidence="20">
    <location>
        <begin position="173"/>
        <end position="181"/>
    </location>
</feature>
<feature type="strand" evidence="20">
    <location>
        <begin position="185"/>
        <end position="190"/>
    </location>
</feature>
<feature type="turn" evidence="20">
    <location>
        <begin position="193"/>
        <end position="195"/>
    </location>
</feature>
<feature type="helix" evidence="20">
    <location>
        <begin position="196"/>
        <end position="199"/>
    </location>
</feature>
<feature type="strand" evidence="20">
    <location>
        <begin position="200"/>
        <end position="205"/>
    </location>
</feature>
<feature type="helix" evidence="20">
    <location>
        <begin position="238"/>
        <end position="253"/>
    </location>
</feature>
<feature type="strand" evidence="20">
    <location>
        <begin position="256"/>
        <end position="265"/>
    </location>
</feature>
<feature type="helix" evidence="20">
    <location>
        <begin position="274"/>
        <end position="291"/>
    </location>
</feature>
<feature type="strand" evidence="20">
    <location>
        <begin position="293"/>
        <end position="298"/>
    </location>
</feature>
<feature type="helix" evidence="20">
    <location>
        <begin position="301"/>
        <end position="310"/>
    </location>
</feature>
<feature type="strand" evidence="20">
    <location>
        <begin position="317"/>
        <end position="320"/>
    </location>
</feature>
<feature type="strand" evidence="20">
    <location>
        <begin position="326"/>
        <end position="328"/>
    </location>
</feature>
<feature type="strand" evidence="20">
    <location>
        <begin position="331"/>
        <end position="333"/>
    </location>
</feature>
<feature type="helix" evidence="20">
    <location>
        <begin position="335"/>
        <end position="337"/>
    </location>
</feature>
<feature type="helix" evidence="20">
    <location>
        <begin position="341"/>
        <end position="363"/>
    </location>
</feature>
<feature type="helix" evidence="20">
    <location>
        <begin position="376"/>
        <end position="383"/>
    </location>
</feature>
<feature type="turn" evidence="20">
    <location>
        <begin position="386"/>
        <end position="390"/>
    </location>
</feature>
<feature type="helix" evidence="20">
    <location>
        <begin position="395"/>
        <end position="423"/>
    </location>
</feature>
<feature type="helix" evidence="20">
    <location>
        <begin position="436"/>
        <end position="438"/>
    </location>
</feature>
<feature type="helix" evidence="20">
    <location>
        <begin position="445"/>
        <end position="447"/>
    </location>
</feature>
<feature type="helix" evidence="20">
    <location>
        <begin position="451"/>
        <end position="454"/>
    </location>
</feature>
<feature type="strand" evidence="20">
    <location>
        <begin position="462"/>
        <end position="469"/>
    </location>
</feature>
<feature type="strand" evidence="20">
    <location>
        <begin position="471"/>
        <end position="473"/>
    </location>
</feature>
<feature type="strand" evidence="20">
    <location>
        <begin position="475"/>
        <end position="484"/>
    </location>
</feature>
<feature type="strand" evidence="20">
    <location>
        <begin position="489"/>
        <end position="491"/>
    </location>
</feature>
<feature type="strand" evidence="20">
    <location>
        <begin position="500"/>
        <end position="504"/>
    </location>
</feature>
<feature type="helix" evidence="20">
    <location>
        <begin position="507"/>
        <end position="521"/>
    </location>
</feature>
<feature type="strand" evidence="20">
    <location>
        <begin position="530"/>
        <end position="539"/>
    </location>
</feature>
<feature type="strand" evidence="20">
    <location>
        <begin position="543"/>
        <end position="550"/>
    </location>
</feature>
<feature type="strand" evidence="20">
    <location>
        <begin position="574"/>
        <end position="581"/>
    </location>
</feature>
<feature type="strand" evidence="21">
    <location>
        <begin position="583"/>
        <end position="585"/>
    </location>
</feature>
<feature type="strand" evidence="20">
    <location>
        <begin position="588"/>
        <end position="593"/>
    </location>
</feature>
<feature type="turn" evidence="20">
    <location>
        <begin position="594"/>
        <end position="597"/>
    </location>
</feature>
<feature type="strand" evidence="20">
    <location>
        <begin position="598"/>
        <end position="611"/>
    </location>
</feature>
<feature type="strand" evidence="20">
    <location>
        <begin position="613"/>
        <end position="615"/>
    </location>
</feature>
<feature type="strand" evidence="20">
    <location>
        <begin position="618"/>
        <end position="621"/>
    </location>
</feature>
<feature type="strand" evidence="20">
    <location>
        <begin position="642"/>
        <end position="647"/>
    </location>
</feature>
<feature type="strand" evidence="20">
    <location>
        <begin position="650"/>
        <end position="660"/>
    </location>
</feature>
<feature type="strand" evidence="20">
    <location>
        <begin position="663"/>
        <end position="670"/>
    </location>
</feature>
<feature type="strand" evidence="20">
    <location>
        <begin position="674"/>
        <end position="682"/>
    </location>
</feature>
<feature type="strand" evidence="20">
    <location>
        <begin position="693"/>
        <end position="701"/>
    </location>
</feature>
<feature type="strand" evidence="20">
    <location>
        <begin position="708"/>
        <end position="713"/>
    </location>
</feature>
<feature type="strand" evidence="20">
    <location>
        <begin position="718"/>
        <end position="722"/>
    </location>
</feature>
<feature type="strand" evidence="20">
    <location>
        <begin position="727"/>
        <end position="729"/>
    </location>
</feature>
<feature type="helix" evidence="20">
    <location>
        <begin position="738"/>
        <end position="740"/>
    </location>
</feature>
<feature type="strand" evidence="20">
    <location>
        <begin position="742"/>
        <end position="751"/>
    </location>
</feature>
<feature type="strand" evidence="20">
    <location>
        <begin position="756"/>
        <end position="760"/>
    </location>
</feature>
<feature type="strand" evidence="20">
    <location>
        <begin position="765"/>
        <end position="768"/>
    </location>
</feature>
<feature type="strand" evidence="20">
    <location>
        <begin position="774"/>
        <end position="782"/>
    </location>
</feature>
<feature type="strand" evidence="20">
    <location>
        <begin position="788"/>
        <end position="790"/>
    </location>
</feature>
<feature type="strand" evidence="20">
    <location>
        <begin position="812"/>
        <end position="821"/>
    </location>
</feature>
<feature type="turn" evidence="21">
    <location>
        <begin position="823"/>
        <end position="825"/>
    </location>
</feature>
<feature type="helix" evidence="20">
    <location>
        <begin position="826"/>
        <end position="838"/>
    </location>
</feature>
<feature type="strand" evidence="20">
    <location>
        <begin position="842"/>
        <end position="848"/>
    </location>
</feature>
<feature type="helix" evidence="20">
    <location>
        <begin position="850"/>
        <end position="856"/>
    </location>
</feature>
<feature type="strand" evidence="20">
    <location>
        <begin position="859"/>
        <end position="864"/>
    </location>
</feature>
<feature type="strand" evidence="20">
    <location>
        <begin position="874"/>
        <end position="881"/>
    </location>
</feature>
<feature type="strand" evidence="20">
    <location>
        <begin position="886"/>
        <end position="893"/>
    </location>
</feature>
<feature type="turn" evidence="20">
    <location>
        <begin position="901"/>
        <end position="903"/>
    </location>
</feature>
<feature type="strand" evidence="20">
    <location>
        <begin position="907"/>
        <end position="910"/>
    </location>
</feature>
<feature type="helix" evidence="20">
    <location>
        <begin position="911"/>
        <end position="914"/>
    </location>
</feature>
<feature type="turn" evidence="20">
    <location>
        <begin position="915"/>
        <end position="917"/>
    </location>
</feature>
<feature type="strand" evidence="20">
    <location>
        <begin position="922"/>
        <end position="926"/>
    </location>
</feature>
<feature type="strand" evidence="20">
    <location>
        <begin position="930"/>
        <end position="933"/>
    </location>
</feature>
<feature type="helix" evidence="20">
    <location>
        <begin position="934"/>
        <end position="936"/>
    </location>
</feature>
<feature type="strand" evidence="20">
    <location>
        <begin position="966"/>
        <end position="969"/>
    </location>
</feature>
<feature type="strand" evidence="20">
    <location>
        <begin position="974"/>
        <end position="980"/>
    </location>
</feature>
<dbReference type="EC" id="3.2.1.24" evidence="4 5 10 11"/>
<dbReference type="PDB" id="6B9O">
    <property type="method" value="X-ray"/>
    <property type="resolution" value="1.84 A"/>
    <property type="chains" value="A/B=1-981"/>
</dbReference>
<dbReference type="PDB" id="6B9P">
    <property type="method" value="X-ray"/>
    <property type="resolution" value="2.00 A"/>
    <property type="chains" value="A/B=1-981"/>
</dbReference>
<dbReference type="PDBsum" id="6B9O"/>
<dbReference type="PDBsum" id="6B9P"/>
<dbReference type="SMR" id="C0HJB3"/>
<dbReference type="BindingDB" id="C0HJB3"/>
<dbReference type="ChEMBL" id="CHEMBL3392945"/>
<dbReference type="DrugCentral" id="C0HJB3"/>
<dbReference type="CAZy" id="GH38">
    <property type="family name" value="Glycoside Hydrolase Family 38"/>
</dbReference>
<dbReference type="GlyConnect" id="44">
    <property type="glycosylation" value="3 N-Linked glycans"/>
</dbReference>
<dbReference type="iPTMnet" id="C0HJB3"/>
<dbReference type="GO" id="GO:0000326">
    <property type="term" value="C:protein storage vacuole"/>
    <property type="evidence" value="ECO:0007669"/>
    <property type="project" value="UniProtKB-SubCell"/>
</dbReference>
<dbReference type="GO" id="GO:0004559">
    <property type="term" value="F:alpha-mannosidase activity"/>
    <property type="evidence" value="ECO:0007669"/>
    <property type="project" value="UniProtKB-EC"/>
</dbReference>
<dbReference type="GO" id="GO:0030246">
    <property type="term" value="F:carbohydrate binding"/>
    <property type="evidence" value="ECO:0007669"/>
    <property type="project" value="InterPro"/>
</dbReference>
<dbReference type="GO" id="GO:0046872">
    <property type="term" value="F:metal ion binding"/>
    <property type="evidence" value="ECO:0007669"/>
    <property type="project" value="UniProtKB-KW"/>
</dbReference>
<dbReference type="GO" id="GO:0006013">
    <property type="term" value="P:mannose metabolic process"/>
    <property type="evidence" value="ECO:0007669"/>
    <property type="project" value="InterPro"/>
</dbReference>
<dbReference type="CDD" id="cd10810">
    <property type="entry name" value="GH38N_AMII_LAM_like"/>
    <property type="match status" value="1"/>
</dbReference>
<dbReference type="FunFam" id="1.20.1270.50:FF:000002">
    <property type="entry name" value="Alpha-mannosidase"/>
    <property type="match status" value="1"/>
</dbReference>
<dbReference type="FunFam" id="1.20.1270.50:FF:000003">
    <property type="entry name" value="Alpha-mannosidase"/>
    <property type="match status" value="1"/>
</dbReference>
<dbReference type="FunFam" id="2.60.40.1180:FF:000015">
    <property type="entry name" value="Alpha-mannosidase"/>
    <property type="match status" value="1"/>
</dbReference>
<dbReference type="FunFam" id="2.60.40.1360:FF:000001">
    <property type="entry name" value="Alpha-mannosidase"/>
    <property type="match status" value="1"/>
</dbReference>
<dbReference type="FunFam" id="2.70.98.30:FF:000004">
    <property type="entry name" value="Alpha-mannosidase"/>
    <property type="match status" value="1"/>
</dbReference>
<dbReference type="FunFam" id="3.20.110.10:FF:000001">
    <property type="entry name" value="Alpha-mannosidase"/>
    <property type="match status" value="1"/>
</dbReference>
<dbReference type="Gene3D" id="2.60.40.1360">
    <property type="match status" value="1"/>
</dbReference>
<dbReference type="Gene3D" id="3.20.110.10">
    <property type="entry name" value="Glycoside hydrolase 38, N terminal domain"/>
    <property type="match status" value="1"/>
</dbReference>
<dbReference type="Gene3D" id="1.20.1270.50">
    <property type="entry name" value="Glycoside hydrolase family 38, central domain"/>
    <property type="match status" value="2"/>
</dbReference>
<dbReference type="Gene3D" id="2.60.40.1180">
    <property type="entry name" value="Golgi alpha-mannosidase II"/>
    <property type="match status" value="1"/>
</dbReference>
<dbReference type="Gene3D" id="2.70.98.30">
    <property type="entry name" value="Golgi alpha-mannosidase II, domain 4"/>
    <property type="match status" value="1"/>
</dbReference>
<dbReference type="InterPro" id="IPR011013">
    <property type="entry name" value="Gal_mutarotase_sf_dom"/>
</dbReference>
<dbReference type="InterPro" id="IPR041147">
    <property type="entry name" value="GH38_C"/>
</dbReference>
<dbReference type="InterPro" id="IPR011330">
    <property type="entry name" value="Glyco_hydro/deAcase_b/a-brl"/>
</dbReference>
<dbReference type="InterPro" id="IPR011682">
    <property type="entry name" value="Glyco_hydro_38_C"/>
</dbReference>
<dbReference type="InterPro" id="IPR015341">
    <property type="entry name" value="Glyco_hydro_38_cen"/>
</dbReference>
<dbReference type="InterPro" id="IPR037094">
    <property type="entry name" value="Glyco_hydro_38_cen_sf"/>
</dbReference>
<dbReference type="InterPro" id="IPR000602">
    <property type="entry name" value="Glyco_hydro_38_N"/>
</dbReference>
<dbReference type="InterPro" id="IPR027291">
    <property type="entry name" value="Glyco_hydro_38_N_sf"/>
</dbReference>
<dbReference type="InterPro" id="IPR028995">
    <property type="entry name" value="Glyco_hydro_57/38_cen_sf"/>
</dbReference>
<dbReference type="InterPro" id="IPR013780">
    <property type="entry name" value="Glyco_hydro_b"/>
</dbReference>
<dbReference type="InterPro" id="IPR050843">
    <property type="entry name" value="Glycosyl_Hydrlase_38"/>
</dbReference>
<dbReference type="PANTHER" id="PTHR11607">
    <property type="entry name" value="ALPHA-MANNOSIDASE"/>
    <property type="match status" value="1"/>
</dbReference>
<dbReference type="PANTHER" id="PTHR11607:SF61">
    <property type="entry name" value="ALPHA-MANNOSIDASE"/>
    <property type="match status" value="1"/>
</dbReference>
<dbReference type="Pfam" id="PF09261">
    <property type="entry name" value="Alpha-mann_mid"/>
    <property type="match status" value="1"/>
</dbReference>
<dbReference type="Pfam" id="PF17677">
    <property type="entry name" value="Glyco_hydro38C2"/>
    <property type="match status" value="1"/>
</dbReference>
<dbReference type="Pfam" id="PF07748">
    <property type="entry name" value="Glyco_hydro_38C"/>
    <property type="match status" value="1"/>
</dbReference>
<dbReference type="Pfam" id="PF01074">
    <property type="entry name" value="Glyco_hydro_38N"/>
    <property type="match status" value="1"/>
</dbReference>
<dbReference type="SMART" id="SM00872">
    <property type="entry name" value="Alpha-mann_mid"/>
    <property type="match status" value="1"/>
</dbReference>
<dbReference type="SUPFAM" id="SSF88688">
    <property type="entry name" value="Families 57/38 glycoside transferase middle domain"/>
    <property type="match status" value="1"/>
</dbReference>
<dbReference type="SUPFAM" id="SSF74650">
    <property type="entry name" value="Galactose mutarotase-like"/>
    <property type="match status" value="1"/>
</dbReference>
<dbReference type="SUPFAM" id="SSF88713">
    <property type="entry name" value="Glycoside hydrolase/deacetylase"/>
    <property type="match status" value="1"/>
</dbReference>
<sequence length="981" mass="111024">MKYNTGAGTVPEQLNVHLVPHSHDDVGWLKTVDQYYVGSENYIQEACVENVLDSVVMSLQRDPNRKFVFGEMAFFHRWWLEQTPETKELXXKLVKAGQLEFVNGGWCMHDEATTHYIDMIDHTTLGHRFLQEQFNKIPRAGWQIDPFGHSAVQGYLLGAELGFDSVHFARIDYQDREKRKGEKSLEVVWRGSKTFGSSAQIFANAFPGHYGPPNGFNFEVRNNFVPLQDDPRLFDTNVEERVQNFLDAALTQAKLTRTNHLMWTMGDDFQYQYAESWFKQMDKLLHHVNKDGRVNALYSTPSLYTEAKNAANQTWPLKIDDYFPYADGRNAYWTGFYTSRXXXXXXXXMLSGYYLATRHSGFFAGKKSTKYHAFDLADALGIAQHHDAVSGTAKQHTTNDYAKRLALGASKAEAVVSSSLACLTSKQSADQCSAPASAFSQCHLFNISYCPPTESSLPDDKSLVVVVYNPLGWSRNEIVRIPVNDANLVVKDSSGNKLEVQYVEMDDVTANLRSFYVKXXXXXXXXXXXXYWSLFKASVPPLGWSTYFISEATGKGTRNALTLSQKGETLNIGPGDLKMSFSSLTGQLKRMYNSKTGVDLPIQQNYLWYESSEGDFSDYQASGAYLFRPNGQPPPHTVSRSSVTRVTRGPLVDEVHQKFNSWISQVTRLYKDKDHAEIEFTIGPIPTDDGVGKEVITRMTSTMATNKEFYTDSNGRDFLKRVRDYREDWPLEVTQPVAGNYYPLNLGLYTKDEKSEFSVLVDRATGGASIKDGEVELMLHRRTLRDDGRGVGEPLDEQVCMNKEYTCEGLTVRGNYYLSIHKPAGGSRWRRTTGQEIYSPMLLAFTQENMENWKSSHSTKAYAMDPNYSLPPSVALITLEELDDGLVLLRLAHLYEPSEDAEYSTLTKVELKKLFATQKLEELREVSLSANQEKSEMKKMKWSVEGDNEQEPQAVRGGPVSNADFVVELGPMEIRTFLLQF</sequence>
<keyword id="KW-0002">3D-structure</keyword>
<keyword id="KW-0903">Direct protein sequencing</keyword>
<keyword id="KW-1015">Disulfide bond</keyword>
<keyword id="KW-0325">Glycoprotein</keyword>
<keyword id="KW-0326">Glycosidase</keyword>
<keyword id="KW-0378">Hydrolase</keyword>
<keyword id="KW-0479">Metal-binding</keyword>
<keyword id="KW-0926">Vacuole</keyword>
<keyword id="KW-0862">Zinc</keyword>
<reference key="1">
    <citation type="journal article" date="2014" name="Glycobiology">
        <title>Jack bean alpha-mannosidase: amino acid sequencing and N-glycosylation analysis of a valuable glycomics tool.</title>
        <authorList>
            <person name="Gnanesh Kumar B.S."/>
            <person name="Pohlentz G."/>
            <person name="Schulte M."/>
            <person name="Mormann M."/>
            <person name="Siva Kumar N."/>
        </authorList>
    </citation>
    <scope>PROTEIN SEQUENCE</scope>
    <scope>PROTEOLYTIC PROCESSING</scope>
    <scope>GLYCOSYLATION AT ASN-312 AND ASN-446</scope>
    <scope>DISULFIDE BONDS</scope>
    <scope>IDENTIFICATION BY MASS SPECTROMETRY</scope>
    <scope>IDENTIFICATION OF CLEAVAGE SITE</scope>
    <source>
        <tissue evidence="15">Seed</tissue>
    </source>
</reference>
<reference key="2">
    <citation type="journal article" date="1998" name="J. Biol. Chem.">
        <title>Identification of the active site nucleophile in jack bean alpha-mannosidase using 5-fluoro-beta-L-gulosyl fluoride.</title>
        <authorList>
            <person name="Howard S."/>
            <person name="He S."/>
            <person name="Withers S.G."/>
        </authorList>
    </citation>
    <scope>PROTEIN SEQUENCE OF 135-154</scope>
    <scope>ACTIVITY REGULATION</scope>
    <scope>MASS SPECTROMETRY</scope>
    <scope>ACTIVE SITE</scope>
    <scope>PROTEOLYTIC PROCESSING</scope>
</reference>
<reference evidence="19" key="3">
    <citation type="journal article" date="1967" name="J. Biol. Chem.">
        <title>Studies on the glycosidases in jack bean meal. I. Isolation and properties of alpha-mannosidase.</title>
        <authorList>
            <person name="Li Y.T."/>
        </authorList>
    </citation>
    <scope>FUNCTION</scope>
    <scope>CATALYTIC ACTIVITY</scope>
    <scope>ACTIVITY REGULATION</scope>
    <scope>BIOPHYSICOCHEMICAL PROPERTIES</scope>
</reference>
<reference evidence="19" key="4">
    <citation type="journal article" date="1968" name="Biochem. J.">
        <title>Purification and properties of alpha-D-mannosidase from jack-bean meal.</title>
        <authorList>
            <person name="Snaith S.M."/>
            <person name="Levvy G.A."/>
        </authorList>
    </citation>
    <scope>FUNCTION</scope>
    <scope>CATALYTIC ACTIVITY</scope>
    <scope>ACTIVITY REGULATION</scope>
    <scope>COFACTOR</scope>
    <scope>BIOPHYSICOCHEMICAL PROPERTIES</scope>
</reference>
<reference evidence="19" key="5">
    <citation type="journal article" date="1975" name="Biochem. J.">
        <title>Characterization of jack-bean alpha-D-mannosidase as a zinc metalloenzyme.</title>
        <authorList>
            <person name="Snaith S.M."/>
        </authorList>
    </citation>
    <scope>FUNCTION</scope>
    <scope>CATALYTIC ACTIVITY</scope>
    <scope>ACTIVITY REGULATION</scope>
    <scope>COFACTOR</scope>
</reference>
<reference evidence="19" key="6">
    <citation type="journal article" date="1976" name="Biochim. Biophys. Acta">
        <title>Alpha-D-Mannosidase. Preparation and properties of free and insolubilized enzyme.</title>
        <authorList>
            <person name="Sheperd V."/>
            <person name="Montgomery R."/>
        </authorList>
    </citation>
    <scope>FUNCTION</scope>
    <scope>CATALYTIC ACTIVITY</scope>
    <scope>BIOPHYSICOCHEMICAL PROPERTIES</scope>
    <scope>SUBUNIT</scope>
</reference>
<reference evidence="19" key="7">
    <citation type="journal article" date="1988" name="Planta">
        <title>Transport and posttranslational processing of the vacuolar enzyme alpha-mannosidase in jack-bean cotyledons.</title>
        <authorList>
            <person name="Faye L."/>
            <person name="Greenwood J.S."/>
            <person name="Herman E.M."/>
            <person name="Sturm A."/>
            <person name="Chrispeels M.J."/>
        </authorList>
    </citation>
    <scope>PROTEOLYTIC CLEAVAGE</scope>
    <scope>SUBCELLULAR LOCATION</scope>
    <scope>DEVELOPMENTAL STAGE</scope>
</reference>
<reference evidence="19" key="8">
    <citation type="journal article" date="2005" name="J. Med. Chem.">
        <title>Functionalized pyrrolidines inhibit alpha-mannosidase activity and growth of human glioblastoma and melanoma cells.</title>
        <authorList>
            <person name="Fiaux H."/>
            <person name="Popowycz F."/>
            <person name="Favre S."/>
            <person name="Schuetz C."/>
            <person name="Vogel P."/>
            <person name="Gerber-Lemaire S."/>
            <person name="Juillerat-Jeanneret L."/>
        </authorList>
    </citation>
    <scope>ACTIVITY REGULATION</scope>
</reference>
<reference evidence="19" key="9">
    <citation type="journal article" date="2011" name="Int. J. Biol. Macromol.">
        <title>Jack bean alpha-mannosidase (Jbalpha-man): tolerance to alkali, chelating and reducing agents and energetics of catalysis and inhibition.</title>
        <authorList>
            <person name="Kumar A."/>
            <person name="Gaikwad S.M."/>
        </authorList>
    </citation>
    <scope>COFACTOR</scope>
    <scope>ACTIVITY REGULATION</scope>
    <scope>BIOPHYSICOCHEMICAL PROPERTIES</scope>
    <scope>SUBUNIT</scope>
    <scope>PRESENCE OF DISULFIDE BONDS</scope>
</reference>
<name>MANA_CANEN</name>
<comment type="function">
    <text evidence="4 5 10 11">Liberates mannose from p-nitrophenyl-alpha-D-mannoside (PubMed:1156387, PubMed:12325362, PubMed:4973951). Liberates mannose from further alpha-D-mannosides including methyl-, benzyl-alpha-D-mannoside, 1-6-linked di-, tri- and tetrasaccharides of alpha-D-mannose and mannosyl-rhamnose (PubMed:12325362). Liberates mannose from various glycoproteins like ovalbumin and ovomucoid (PubMed:12325362, PubMed:5145). Does not hydrolyze beta-D-mannosides (PubMed:12325362). Has glycosyltransferase activity, forming disaccharides from mannose and lyxose but not from glucose, galactose, ribose, xylose or arabinose (PubMed:12325362).</text>
</comment>
<comment type="catalytic activity">
    <reaction evidence="4 5 10 11">
        <text>Hydrolysis of terminal, non-reducing alpha-D-mannose residues in alpha-D-mannosides.</text>
        <dbReference type="EC" id="3.2.1.24"/>
    </reaction>
</comment>
<comment type="cofactor">
    <cofactor evidence="4 7 10">
        <name>Zn(2+)</name>
        <dbReference type="ChEBI" id="CHEBI:29105"/>
    </cofactor>
    <text evidence="1">Binds 1 zinc ion per subunit.</text>
</comment>
<comment type="activity regulation">
    <text evidence="4 5 6 7 10 12">Inhibited by 2,3,4,6-tetra-O-acetyl-5-fluoro-beta-L-gulopyranosyl fluoride which acts as a slow substrate, doubling as a competitive inhibitor as it forms a high steady state concentration of glycosyl-enzyme intermediate that blocks the active site (PubMed:9442045). Inhibited by 2,3,4,6-tetra-O-acetyl-5-fluoro-alpha-D-mannopyranosyl fluoride which also acts as a slow substrate but no intermediates accumulate (PubMed:9442045). Inhibited by EDTA (PubMed:1156387, PubMed:21924285, PubMed:4973951). Inhibited by metal ion Cu(2+) (PubMed:1156387, PubMed:4973951). Inhibited by metal ions Fe(2+), Cd(2+) and Co(2+) (PubMed:4973951). Inhibited by metal ions Ag(+) and Hg(2+) (PubMed:12325362, PubMed:4973951). Competitively inhibited by mannono-1-4-lactone and mannono-1-5-lactone (PubMed:12325362). Inhibited by swainsonine but not by 1-desoxymannojirimycin (PubMed:21924285). Inhibited by pyrrolidine-3,4-diol derivatives (PubMed:15974577).</text>
</comment>
<comment type="biophysicochemical properties">
    <kinetics>
        <KM evidence="5">2.5 mM for p-nitrophenyl-alpha-D-mannoside</KM>
        <KM evidence="5">31 mM for benzyl-alpha-D-mannoside</KM>
        <KM evidence="5">0.12 M for methyl-alpha-D-mannoside</KM>
        <KM evidence="7">10.52 uM for 4-methylumbellideryl-alpha-mannoside</KM>
    </kinetics>
    <phDependence>
        <text evidence="7 10 11">Optimum pH is 4-5 (PubMed:12325362, PubMed:21924285, PubMed:5145). Activity is stable between pH 4.0 and pH 7.0 in the presence of Zn(2+) (PubMed:4973951). Activity is stable between pH 6.0 and pH 8.5, decreases below pH 5.5 at 25 degrees Celsius (PubMed:12325362). Activity is lost at pH 3 and lower, rapidly diminishes at pH 7-10 but is higher and longest at pH 11-12 (PubMed:21924285).</text>
    </phDependence>
    <temperatureDependence>
        <text evidence="5 7 11">Retains 50% activity after 5 min at 70 degrees Celsius (PubMed:12325362). Retains full activity after 5 min at 70 degrees Celsius but is completely inactive after 5 min at 80 degrees Celsius (PubMed:5145). Retains 100%, 50% and &lt;10% activity after 2 hours at 40, 55 and 70 degrees Celsius, respectively (PubMed:21924285).</text>
    </temperatureDependence>
</comment>
<comment type="subunit">
    <text evidence="7 17">Dimer of dimers of heavy and light subunits.</text>
</comment>
<comment type="subcellular location">
    <subcellularLocation>
        <location evidence="8">Protein storage vacuole</location>
    </subcellularLocation>
</comment>
<comment type="developmental stage">
    <text evidence="8">Expressed from very early on in developing cotyledons.</text>
</comment>
<comment type="PTM">
    <text evidence="8 9 12 14">Produced as a precursor which is then proteolytically cleaved into a 66kD heavy subunit and a 44kD light subunit. Cleavage probably occurs in protein bodies/protein storage vacuoles.</text>
</comment>
<comment type="mass spectrometry" mass="66533.0" method="Electrospray" evidence="12">
    <molecule>Alpha-mannosidase, heavy subunit</molecule>
</comment>
<comment type="mass spectrometry" mass="43846.0" method="Electrospray" evidence="12">
    <molecule>Alpha-mannosidase, light subunit</molecule>
</comment>
<comment type="similarity">
    <text evidence="2">Belongs to the glycosyl hydrolase 38 family.</text>
</comment>
<proteinExistence type="evidence at protein level"/>
<protein>
    <recommendedName>
        <fullName evidence="16">Alpha-mannosidase</fullName>
        <shortName evidence="15">JBM</shortName>
        <shortName evidence="13">Jbalpha-man</shortName>
        <ecNumber evidence="4 5 10 11">3.2.1.24</ecNumber>
    </recommendedName>
    <component>
        <recommendedName>
            <fullName evidence="14">Alpha-mannosidase, heavy subunit</fullName>
        </recommendedName>
    </component>
    <component>
        <recommendedName>
            <fullName evidence="14">Alpha-mannosidase, light subunit</fullName>
        </recommendedName>
    </component>
</protein>
<organism evidence="18">
    <name type="scientific">Canavalia ensiformis</name>
    <name type="common">Jack bean</name>
    <name type="synonym">Dolichos ensiformis</name>
    <dbReference type="NCBI Taxonomy" id="3823"/>
    <lineage>
        <taxon>Eukaryota</taxon>
        <taxon>Viridiplantae</taxon>
        <taxon>Streptophyta</taxon>
        <taxon>Embryophyta</taxon>
        <taxon>Tracheophyta</taxon>
        <taxon>Spermatophyta</taxon>
        <taxon>Magnoliopsida</taxon>
        <taxon>eudicotyledons</taxon>
        <taxon>Gunneridae</taxon>
        <taxon>Pentapetalae</taxon>
        <taxon>rosids</taxon>
        <taxon>fabids</taxon>
        <taxon>Fabales</taxon>
        <taxon>Fabaceae</taxon>
        <taxon>Papilionoideae</taxon>
        <taxon>50 kb inversion clade</taxon>
        <taxon>NPAAA clade</taxon>
        <taxon>indigoferoid/millettioid clade</taxon>
        <taxon>Phaseoleae</taxon>
        <taxon>Canavalia</taxon>
    </lineage>
</organism>
<accession>C0HJB3</accession>